<organism>
    <name type="scientific">Rhodococcus jostii (strain RHA1)</name>
    <dbReference type="NCBI Taxonomy" id="101510"/>
    <lineage>
        <taxon>Bacteria</taxon>
        <taxon>Bacillati</taxon>
        <taxon>Actinomycetota</taxon>
        <taxon>Actinomycetes</taxon>
        <taxon>Mycobacteriales</taxon>
        <taxon>Nocardiaceae</taxon>
        <taxon>Rhodococcus</taxon>
    </lineage>
</organism>
<evidence type="ECO:0000255" key="1">
    <source>
        <dbReference type="HAMAP-Rule" id="MF_00028"/>
    </source>
</evidence>
<comment type="function">
    <text evidence="1">Catalyzes amidations at positions B, D, E, and G on adenosylcobyrinic A,C-diamide. NH(2) groups are provided by glutamine, and one molecule of ATP is hydrogenolyzed for each amidation.</text>
</comment>
<comment type="pathway">
    <text evidence="1">Cofactor biosynthesis; adenosylcobalamin biosynthesis.</text>
</comment>
<comment type="similarity">
    <text evidence="1">Belongs to the CobB/CobQ family. CobQ subfamily.</text>
</comment>
<protein>
    <recommendedName>
        <fullName evidence="1">Cobyric acid synthase</fullName>
    </recommendedName>
</protein>
<feature type="chain" id="PRO_0000332382" description="Cobyric acid synthase">
    <location>
        <begin position="1"/>
        <end position="512"/>
    </location>
</feature>
<feature type="domain" description="GATase cobBQ-type" evidence="1">
    <location>
        <begin position="262"/>
        <end position="442"/>
    </location>
</feature>
<feature type="active site" description="Nucleophile" evidence="1">
    <location>
        <position position="343"/>
    </location>
</feature>
<feature type="active site" evidence="1">
    <location>
        <position position="434"/>
    </location>
</feature>
<dbReference type="EMBL" id="CP000431">
    <property type="protein sequence ID" value="ABG98378.1"/>
    <property type="molecule type" value="Genomic_DNA"/>
</dbReference>
<dbReference type="RefSeq" id="WP_009479764.1">
    <property type="nucleotide sequence ID" value="NC_008268.1"/>
</dbReference>
<dbReference type="KEGG" id="rha:RHA1_ro06605"/>
<dbReference type="eggNOG" id="COG1492">
    <property type="taxonomic scope" value="Bacteria"/>
</dbReference>
<dbReference type="HOGENOM" id="CLU_019250_2_2_11"/>
<dbReference type="OrthoDB" id="9808302at2"/>
<dbReference type="UniPathway" id="UPA00148"/>
<dbReference type="Proteomes" id="UP000008710">
    <property type="component" value="Chromosome"/>
</dbReference>
<dbReference type="GO" id="GO:0015420">
    <property type="term" value="F:ABC-type vitamin B12 transporter activity"/>
    <property type="evidence" value="ECO:0007669"/>
    <property type="project" value="UniProtKB-UniRule"/>
</dbReference>
<dbReference type="GO" id="GO:0003824">
    <property type="term" value="F:catalytic activity"/>
    <property type="evidence" value="ECO:0007669"/>
    <property type="project" value="InterPro"/>
</dbReference>
<dbReference type="GO" id="GO:0009236">
    <property type="term" value="P:cobalamin biosynthetic process"/>
    <property type="evidence" value="ECO:0007669"/>
    <property type="project" value="UniProtKB-UniRule"/>
</dbReference>
<dbReference type="CDD" id="cd05389">
    <property type="entry name" value="CobQ_N"/>
    <property type="match status" value="1"/>
</dbReference>
<dbReference type="CDD" id="cd01750">
    <property type="entry name" value="GATase1_CobQ"/>
    <property type="match status" value="1"/>
</dbReference>
<dbReference type="Gene3D" id="3.40.50.880">
    <property type="match status" value="1"/>
</dbReference>
<dbReference type="Gene3D" id="3.40.50.300">
    <property type="entry name" value="P-loop containing nucleotide triphosphate hydrolases"/>
    <property type="match status" value="1"/>
</dbReference>
<dbReference type="HAMAP" id="MF_00028">
    <property type="entry name" value="CobQ"/>
    <property type="match status" value="1"/>
</dbReference>
<dbReference type="InterPro" id="IPR029062">
    <property type="entry name" value="Class_I_gatase-like"/>
</dbReference>
<dbReference type="InterPro" id="IPR002586">
    <property type="entry name" value="CobQ/CobB/MinD/ParA_Nub-bd_dom"/>
</dbReference>
<dbReference type="InterPro" id="IPR033949">
    <property type="entry name" value="CobQ_GATase1"/>
</dbReference>
<dbReference type="InterPro" id="IPR047045">
    <property type="entry name" value="CobQ_N"/>
</dbReference>
<dbReference type="InterPro" id="IPR004459">
    <property type="entry name" value="CobQ_synth"/>
</dbReference>
<dbReference type="InterPro" id="IPR011698">
    <property type="entry name" value="GATase_3"/>
</dbReference>
<dbReference type="InterPro" id="IPR027417">
    <property type="entry name" value="P-loop_NTPase"/>
</dbReference>
<dbReference type="NCBIfam" id="TIGR00313">
    <property type="entry name" value="cobQ"/>
    <property type="match status" value="1"/>
</dbReference>
<dbReference type="NCBIfam" id="NF001989">
    <property type="entry name" value="PRK00784.1"/>
    <property type="match status" value="1"/>
</dbReference>
<dbReference type="PANTHER" id="PTHR21343:SF1">
    <property type="entry name" value="COBYRIC ACID SYNTHASE"/>
    <property type="match status" value="1"/>
</dbReference>
<dbReference type="PANTHER" id="PTHR21343">
    <property type="entry name" value="DETHIOBIOTIN SYNTHETASE"/>
    <property type="match status" value="1"/>
</dbReference>
<dbReference type="Pfam" id="PF01656">
    <property type="entry name" value="CbiA"/>
    <property type="match status" value="1"/>
</dbReference>
<dbReference type="Pfam" id="PF07685">
    <property type="entry name" value="GATase_3"/>
    <property type="match status" value="1"/>
</dbReference>
<dbReference type="SUPFAM" id="SSF52317">
    <property type="entry name" value="Class I glutamine amidotransferase-like"/>
    <property type="match status" value="1"/>
</dbReference>
<dbReference type="SUPFAM" id="SSF52540">
    <property type="entry name" value="P-loop containing nucleoside triphosphate hydrolases"/>
    <property type="match status" value="1"/>
</dbReference>
<dbReference type="PROSITE" id="PS51274">
    <property type="entry name" value="GATASE_COBBQ"/>
    <property type="match status" value="1"/>
</dbReference>
<sequence length="512" mass="53612">MSESRWKGALLVAGTTSDAGKSVLVAGLCRMLARRGVRVAPFKAQNMSNNSVVTLDGGEIGRAQALQAAACGLEPSVRFNPVLLKPGSDRTSQLVVRGRAVTSVGARDYIEHRQHLRAVVAEELASLRADYDVVICEGAGSPAEINLRATDLANMGLARAAGLPVIVVGDIDRGGVLAHLFGTVAVLGPDDQALIAGFVINKFRGDVSLLGPGLEQLTAVTGRPTLGVIPFAEDLWLDAEDSLGVVGDAPVGRPAPPIGDDWLRVAAIRLPRISNSTDVEALACEPGVSVRWITDPSRLQDTDLIVLPGSKSTVSDLEWLRRNGIADAIAAHAKRGGPVLGVCGGYQMLGSVIVDDVESGRGAVPGLGLLDLEVEFAPDKVLAQVRGNAHGVPVSGYEIHHGRVRRNGDQPLLHASSGAAEGSIRGAVYGTHWHGLLETDRFRRLLLDDVAEHAGRTGFVTAPDTDVAAIRTAQLDLLADLVEQNLDLRALEDLLGAGAPEGLPAIASTLVS</sequence>
<proteinExistence type="inferred from homology"/>
<accession>Q0S258</accession>
<reference key="1">
    <citation type="journal article" date="2006" name="Proc. Natl. Acad. Sci. U.S.A.">
        <title>The complete genome of Rhodococcus sp. RHA1 provides insights into a catabolic powerhouse.</title>
        <authorList>
            <person name="McLeod M.P."/>
            <person name="Warren R.L."/>
            <person name="Hsiao W.W.L."/>
            <person name="Araki N."/>
            <person name="Myhre M."/>
            <person name="Fernandes C."/>
            <person name="Miyazawa D."/>
            <person name="Wong W."/>
            <person name="Lillquist A.L."/>
            <person name="Wang D."/>
            <person name="Dosanjh M."/>
            <person name="Hara H."/>
            <person name="Petrescu A."/>
            <person name="Morin R.D."/>
            <person name="Yang G."/>
            <person name="Stott J.M."/>
            <person name="Schein J.E."/>
            <person name="Shin H."/>
            <person name="Smailus D."/>
            <person name="Siddiqui A.S."/>
            <person name="Marra M.A."/>
            <person name="Jones S.J.M."/>
            <person name="Holt R."/>
            <person name="Brinkman F.S.L."/>
            <person name="Miyauchi K."/>
            <person name="Fukuda M."/>
            <person name="Davies J.E."/>
            <person name="Mohn W.W."/>
            <person name="Eltis L.D."/>
        </authorList>
    </citation>
    <scope>NUCLEOTIDE SEQUENCE [LARGE SCALE GENOMIC DNA]</scope>
    <source>
        <strain>RHA1</strain>
    </source>
</reference>
<gene>
    <name evidence="1" type="primary">cobQ</name>
    <name type="ordered locus">RHA1_ro06605</name>
</gene>
<name>COBQ_RHOJR</name>
<keyword id="KW-0169">Cobalamin biosynthesis</keyword>
<keyword id="KW-0315">Glutamine amidotransferase</keyword>